<gene>
    <name evidence="1" type="primary">kduI</name>
    <name type="ordered locus">BF0082</name>
</gene>
<protein>
    <recommendedName>
        <fullName evidence="1">4-deoxy-L-threo-5-hexosulose-uronate ketol-isomerase</fullName>
        <ecNumber evidence="1">5.3.1.17</ecNumber>
    </recommendedName>
    <alternativeName>
        <fullName evidence="1">5-keto-4-deoxyuronate isomerase</fullName>
    </alternativeName>
    <alternativeName>
        <fullName evidence="1">DKI isomerase</fullName>
    </alternativeName>
</protein>
<name>KDUI_BACFN</name>
<organism>
    <name type="scientific">Bacteroides fragilis (strain ATCC 25285 / DSM 2151 / CCUG 4856 / JCM 11019 / LMG 10263 / NCTC 9343 / Onslow / VPI 2553 / EN-2)</name>
    <dbReference type="NCBI Taxonomy" id="272559"/>
    <lineage>
        <taxon>Bacteria</taxon>
        <taxon>Pseudomonadati</taxon>
        <taxon>Bacteroidota</taxon>
        <taxon>Bacteroidia</taxon>
        <taxon>Bacteroidales</taxon>
        <taxon>Bacteroidaceae</taxon>
        <taxon>Bacteroides</taxon>
    </lineage>
</organism>
<feature type="chain" id="PRO_1000045078" description="4-deoxy-L-threo-5-hexosulose-uronate ketol-isomerase">
    <location>
        <begin position="1"/>
        <end position="280"/>
    </location>
</feature>
<feature type="binding site" evidence="1">
    <location>
        <position position="198"/>
    </location>
    <ligand>
        <name>Zn(2+)</name>
        <dbReference type="ChEBI" id="CHEBI:29105"/>
    </ligand>
</feature>
<feature type="binding site" evidence="1">
    <location>
        <position position="200"/>
    </location>
    <ligand>
        <name>Zn(2+)</name>
        <dbReference type="ChEBI" id="CHEBI:29105"/>
    </ligand>
</feature>
<feature type="binding site" evidence="1">
    <location>
        <position position="205"/>
    </location>
    <ligand>
        <name>Zn(2+)</name>
        <dbReference type="ChEBI" id="CHEBI:29105"/>
    </ligand>
</feature>
<feature type="binding site" evidence="1">
    <location>
        <position position="247"/>
    </location>
    <ligand>
        <name>Zn(2+)</name>
        <dbReference type="ChEBI" id="CHEBI:29105"/>
    </ligand>
</feature>
<sequence>MKTNYEIRYAAHPEDARSYDTKRIRRDFLIEKVFSADEVNMVYSMYDRMVVGGAMPVKEVLKLEAIDPLKAPYFLTRREMGIFNVGGPGVVRAGDAIFQLDYKEALYLGAGDRDVTFESTDAAHPAKFYFNSLAAHRNYPDKKVTKADAVVAEMGTLEGSNHRNINKMLVNQVLPTCQLQMGMTELAPGSVWNTMPAHVHSRRMEAYFYFEVPEEHAVCHFMGEVDETRHVWMKGDQAVLSPEWSIHSAAATHNYTFIWGMGGENLDYGDQDFSLITDLK</sequence>
<keyword id="KW-0413">Isomerase</keyword>
<keyword id="KW-0479">Metal-binding</keyword>
<keyword id="KW-0862">Zinc</keyword>
<evidence type="ECO:0000255" key="1">
    <source>
        <dbReference type="HAMAP-Rule" id="MF_00687"/>
    </source>
</evidence>
<comment type="function">
    <text evidence="1">Catalyzes the isomerization of 5-dehydro-4-deoxy-D-glucuronate to 3-deoxy-D-glycero-2,5-hexodiulosonate.</text>
</comment>
<comment type="catalytic activity">
    <reaction evidence="1">
        <text>5-dehydro-4-deoxy-D-glucuronate = 3-deoxy-D-glycero-2,5-hexodiulosonate</text>
        <dbReference type="Rhea" id="RHEA:23896"/>
        <dbReference type="ChEBI" id="CHEBI:17117"/>
        <dbReference type="ChEBI" id="CHEBI:29071"/>
        <dbReference type="EC" id="5.3.1.17"/>
    </reaction>
</comment>
<comment type="cofactor">
    <cofactor evidence="1">
        <name>Zn(2+)</name>
        <dbReference type="ChEBI" id="CHEBI:29105"/>
    </cofactor>
    <text evidence="1">Binds 1 zinc ion per subunit.</text>
</comment>
<comment type="pathway">
    <text evidence="1">Glycan metabolism; pectin degradation; 2-dehydro-3-deoxy-D-gluconate from pectin: step 4/5.</text>
</comment>
<comment type="similarity">
    <text evidence="1">Belongs to the KduI family.</text>
</comment>
<dbReference type="EC" id="5.3.1.17" evidence="1"/>
<dbReference type="EMBL" id="CR626927">
    <property type="protein sequence ID" value="CAH05860.1"/>
    <property type="molecule type" value="Genomic_DNA"/>
</dbReference>
<dbReference type="RefSeq" id="WP_005797024.1">
    <property type="nucleotide sequence ID" value="NZ_UFTH01000001.1"/>
</dbReference>
<dbReference type="SMR" id="Q5LJ16"/>
<dbReference type="PaxDb" id="272559-BF9343_0081"/>
<dbReference type="GeneID" id="60369619"/>
<dbReference type="KEGG" id="bfs:BF9343_0081"/>
<dbReference type="eggNOG" id="COG3717">
    <property type="taxonomic scope" value="Bacteria"/>
</dbReference>
<dbReference type="HOGENOM" id="CLU_062609_0_0_10"/>
<dbReference type="UniPathway" id="UPA00545">
    <property type="reaction ID" value="UER00826"/>
</dbReference>
<dbReference type="Proteomes" id="UP000006731">
    <property type="component" value="Chromosome"/>
</dbReference>
<dbReference type="GO" id="GO:0008697">
    <property type="term" value="F:4-deoxy-L-threo-5-hexosulose-uronate ketol-isomerase activity"/>
    <property type="evidence" value="ECO:0007669"/>
    <property type="project" value="UniProtKB-UniRule"/>
</dbReference>
<dbReference type="GO" id="GO:0008270">
    <property type="term" value="F:zinc ion binding"/>
    <property type="evidence" value="ECO:0007669"/>
    <property type="project" value="UniProtKB-UniRule"/>
</dbReference>
<dbReference type="GO" id="GO:0019698">
    <property type="term" value="P:D-galacturonate catabolic process"/>
    <property type="evidence" value="ECO:0007669"/>
    <property type="project" value="TreeGrafter"/>
</dbReference>
<dbReference type="GO" id="GO:0042840">
    <property type="term" value="P:D-glucuronate catabolic process"/>
    <property type="evidence" value="ECO:0007669"/>
    <property type="project" value="TreeGrafter"/>
</dbReference>
<dbReference type="GO" id="GO:0045490">
    <property type="term" value="P:pectin catabolic process"/>
    <property type="evidence" value="ECO:0007669"/>
    <property type="project" value="UniProtKB-UniRule"/>
</dbReference>
<dbReference type="CDD" id="cd20491">
    <property type="entry name" value="cupin_KduI_C"/>
    <property type="match status" value="1"/>
</dbReference>
<dbReference type="CDD" id="cd20294">
    <property type="entry name" value="cupin_KduI_N"/>
    <property type="match status" value="1"/>
</dbReference>
<dbReference type="FunFam" id="2.60.120.10:FF:000018">
    <property type="entry name" value="4-deoxy-L-threo-5-hexosulose-uronate ketol-isomerase"/>
    <property type="match status" value="1"/>
</dbReference>
<dbReference type="Gene3D" id="2.60.120.10">
    <property type="entry name" value="Jelly Rolls"/>
    <property type="match status" value="1"/>
</dbReference>
<dbReference type="Gene3D" id="2.60.120.520">
    <property type="entry name" value="pectin degrading enzyme 5-keto 4- deoxyuronate isomerase, domain 1"/>
    <property type="match status" value="1"/>
</dbReference>
<dbReference type="HAMAP" id="MF_00687">
    <property type="entry name" value="KduI"/>
    <property type="match status" value="1"/>
</dbReference>
<dbReference type="InterPro" id="IPR007045">
    <property type="entry name" value="KduI"/>
</dbReference>
<dbReference type="InterPro" id="IPR021120">
    <property type="entry name" value="KduI/IolB_isomerase"/>
</dbReference>
<dbReference type="InterPro" id="IPR027449">
    <property type="entry name" value="KduI_N"/>
</dbReference>
<dbReference type="InterPro" id="IPR014710">
    <property type="entry name" value="RmlC-like_jellyroll"/>
</dbReference>
<dbReference type="InterPro" id="IPR011051">
    <property type="entry name" value="RmlC_Cupin_sf"/>
</dbReference>
<dbReference type="NCBIfam" id="NF002091">
    <property type="entry name" value="PRK00924.1"/>
    <property type="match status" value="1"/>
</dbReference>
<dbReference type="PANTHER" id="PTHR38461">
    <property type="entry name" value="4-DEOXY-L-THREO-5-HEXOSULOSE-URONATE KETOL-ISOMERASE"/>
    <property type="match status" value="1"/>
</dbReference>
<dbReference type="PANTHER" id="PTHR38461:SF1">
    <property type="entry name" value="4-DEOXY-L-THREO-5-HEXOSULOSE-URONATE KETOL-ISOMERASE"/>
    <property type="match status" value="1"/>
</dbReference>
<dbReference type="Pfam" id="PF04962">
    <property type="entry name" value="KduI"/>
    <property type="match status" value="1"/>
</dbReference>
<dbReference type="PIRSF" id="PIRSF006625">
    <property type="entry name" value="KduI"/>
    <property type="match status" value="1"/>
</dbReference>
<dbReference type="SUPFAM" id="SSF51182">
    <property type="entry name" value="RmlC-like cupins"/>
    <property type="match status" value="1"/>
</dbReference>
<proteinExistence type="inferred from homology"/>
<accession>Q5LJ16</accession>
<reference key="1">
    <citation type="journal article" date="2005" name="Science">
        <title>Extensive DNA inversions in the B. fragilis genome control variable gene expression.</title>
        <authorList>
            <person name="Cerdeno-Tarraga A.-M."/>
            <person name="Patrick S."/>
            <person name="Crossman L.C."/>
            <person name="Blakely G."/>
            <person name="Abratt V."/>
            <person name="Lennard N."/>
            <person name="Poxton I."/>
            <person name="Duerden B."/>
            <person name="Harris B."/>
            <person name="Quail M.A."/>
            <person name="Barron A."/>
            <person name="Clark L."/>
            <person name="Corton C."/>
            <person name="Doggett J."/>
            <person name="Holden M.T.G."/>
            <person name="Larke N."/>
            <person name="Line A."/>
            <person name="Lord A."/>
            <person name="Norbertczak H."/>
            <person name="Ormond D."/>
            <person name="Price C."/>
            <person name="Rabbinowitsch E."/>
            <person name="Woodward J."/>
            <person name="Barrell B.G."/>
            <person name="Parkhill J."/>
        </authorList>
    </citation>
    <scope>NUCLEOTIDE SEQUENCE [LARGE SCALE GENOMIC DNA]</scope>
    <source>
        <strain>ATCC 25285 / DSM 2151 / CCUG 4856 / JCM 11019 / LMG 10263 / NCTC 9343 / Onslow / VPI 2553 / EN-2</strain>
    </source>
</reference>